<evidence type="ECO:0000255" key="1">
    <source>
        <dbReference type="PROSITE-ProRule" id="PRU00608"/>
    </source>
</evidence>
<evidence type="ECO:0000305" key="2"/>
<evidence type="ECO:0007829" key="3">
    <source>
        <dbReference type="PDB" id="4Y1R"/>
    </source>
</evidence>
<name>Y1875_STAAM</name>
<organism>
    <name type="scientific">Staphylococcus aureus (strain Mu50 / ATCC 700699)</name>
    <dbReference type="NCBI Taxonomy" id="158878"/>
    <lineage>
        <taxon>Bacteria</taxon>
        <taxon>Bacillati</taxon>
        <taxon>Bacillota</taxon>
        <taxon>Bacilli</taxon>
        <taxon>Bacillales</taxon>
        <taxon>Staphylococcaceae</taxon>
        <taxon>Staphylococcus</taxon>
    </lineage>
</organism>
<proteinExistence type="evidence at protein level"/>
<protein>
    <recommendedName>
        <fullName>Uncharacterized protein SAV1875</fullName>
    </recommendedName>
</protein>
<sequence>MTKKVAIILANEFEDIEYSSPKEALENAGFNTVVIGDTANSEVVGKHGEKVTVDVGIAEAKPEDYDALLIPGGFSPDHLRGDTEGRYGTFAKYFTKNDVPTFAICHGPQILIDTDDLKGRTLTAVLNVRKDLSNAGAHVVDESVVVDNNIVTSRVPDDLDDFNREIVKQLQ</sequence>
<gene>
    <name type="ordered locus">SAV1875</name>
</gene>
<feature type="chain" id="PRO_0000157834" description="Uncharacterized protein SAV1875">
    <location>
        <begin position="1"/>
        <end position="171"/>
    </location>
</feature>
<feature type="domain" description="PfpI endopeptidase" evidence="1">
    <location>
        <begin position="3"/>
        <end position="171"/>
    </location>
</feature>
<feature type="strand" evidence="3">
    <location>
        <begin position="4"/>
        <end position="8"/>
    </location>
</feature>
<feature type="helix" evidence="3">
    <location>
        <begin position="15"/>
        <end position="27"/>
    </location>
</feature>
<feature type="strand" evidence="3">
    <location>
        <begin position="31"/>
        <end position="38"/>
    </location>
</feature>
<feature type="strand" evidence="3">
    <location>
        <begin position="42"/>
        <end position="44"/>
    </location>
</feature>
<feature type="strand" evidence="3">
    <location>
        <begin position="50"/>
        <end position="52"/>
    </location>
</feature>
<feature type="turn" evidence="3">
    <location>
        <begin position="57"/>
        <end position="59"/>
    </location>
</feature>
<feature type="helix" evidence="3">
    <location>
        <begin position="62"/>
        <end position="64"/>
    </location>
</feature>
<feature type="strand" evidence="3">
    <location>
        <begin position="66"/>
        <end position="70"/>
    </location>
</feature>
<feature type="helix" evidence="3">
    <location>
        <begin position="75"/>
        <end position="79"/>
    </location>
</feature>
<feature type="helix" evidence="3">
    <location>
        <begin position="86"/>
        <end position="96"/>
    </location>
</feature>
<feature type="strand" evidence="3">
    <location>
        <begin position="101"/>
        <end position="104"/>
    </location>
</feature>
<feature type="turn" evidence="3">
    <location>
        <begin position="105"/>
        <end position="107"/>
    </location>
</feature>
<feature type="helix" evidence="3">
    <location>
        <begin position="108"/>
        <end position="112"/>
    </location>
</feature>
<feature type="turn" evidence="3">
    <location>
        <begin position="113"/>
        <end position="115"/>
    </location>
</feature>
<feature type="helix" evidence="3">
    <location>
        <begin position="126"/>
        <end position="128"/>
    </location>
</feature>
<feature type="helix" evidence="3">
    <location>
        <begin position="129"/>
        <end position="134"/>
    </location>
</feature>
<feature type="strand" evidence="3">
    <location>
        <begin position="145"/>
        <end position="147"/>
    </location>
</feature>
<feature type="strand" evidence="3">
    <location>
        <begin position="150"/>
        <end position="153"/>
    </location>
</feature>
<feature type="helix" evidence="3">
    <location>
        <begin position="156"/>
        <end position="158"/>
    </location>
</feature>
<feature type="helix" evidence="3">
    <location>
        <begin position="159"/>
        <end position="171"/>
    </location>
</feature>
<accession>P0A0K0</accession>
<accession>Q53719</accession>
<dbReference type="EMBL" id="BA000017">
    <property type="protein sequence ID" value="BAB58037.1"/>
    <property type="molecule type" value="Genomic_DNA"/>
</dbReference>
<dbReference type="RefSeq" id="WP_000163283.1">
    <property type="nucleotide sequence ID" value="NC_002758.2"/>
</dbReference>
<dbReference type="PDB" id="4Y0N">
    <property type="method" value="X-ray"/>
    <property type="resolution" value="2.10 A"/>
    <property type="chains" value="A/B=1-171"/>
</dbReference>
<dbReference type="PDB" id="4Y1E">
    <property type="method" value="X-ray"/>
    <property type="resolution" value="1.80 A"/>
    <property type="chains" value="A/B=1-171"/>
</dbReference>
<dbReference type="PDB" id="4Y1F">
    <property type="method" value="X-ray"/>
    <property type="resolution" value="1.80 A"/>
    <property type="chains" value="A/B=1-171"/>
</dbReference>
<dbReference type="PDB" id="4Y1G">
    <property type="method" value="X-ray"/>
    <property type="resolution" value="1.90 A"/>
    <property type="chains" value="A/B=1-171"/>
</dbReference>
<dbReference type="PDB" id="4Y1R">
    <property type="method" value="X-ray"/>
    <property type="resolution" value="1.65 A"/>
    <property type="chains" value="A/B=1-171"/>
</dbReference>
<dbReference type="PDBsum" id="4Y0N"/>
<dbReference type="PDBsum" id="4Y1E"/>
<dbReference type="PDBsum" id="4Y1F"/>
<dbReference type="PDBsum" id="4Y1G"/>
<dbReference type="PDBsum" id="4Y1R"/>
<dbReference type="SMR" id="P0A0K0"/>
<dbReference type="MEROPS" id="C56.001"/>
<dbReference type="KEGG" id="sav:SAV1875"/>
<dbReference type="HOGENOM" id="CLU_000445_44_4_9"/>
<dbReference type="PhylomeDB" id="P0A0K0"/>
<dbReference type="EvolutionaryTrace" id="P0A0K0"/>
<dbReference type="Proteomes" id="UP000002481">
    <property type="component" value="Chromosome"/>
</dbReference>
<dbReference type="CDD" id="cd03134">
    <property type="entry name" value="GATase1_PfpI_like"/>
    <property type="match status" value="1"/>
</dbReference>
<dbReference type="Gene3D" id="3.40.50.880">
    <property type="match status" value="1"/>
</dbReference>
<dbReference type="InterPro" id="IPR006286">
    <property type="entry name" value="C56_PfpI-like"/>
</dbReference>
<dbReference type="InterPro" id="IPR029062">
    <property type="entry name" value="Class_I_gatase-like"/>
</dbReference>
<dbReference type="InterPro" id="IPR002818">
    <property type="entry name" value="DJ-1/PfpI"/>
</dbReference>
<dbReference type="NCBIfam" id="TIGR01382">
    <property type="entry name" value="PfpI"/>
    <property type="match status" value="1"/>
</dbReference>
<dbReference type="PANTHER" id="PTHR42733">
    <property type="entry name" value="DJ-1 PROTEIN"/>
    <property type="match status" value="1"/>
</dbReference>
<dbReference type="PANTHER" id="PTHR42733:SF2">
    <property type="entry name" value="DJ-1_THIJ_PFPI FAMILY PROTEIN"/>
    <property type="match status" value="1"/>
</dbReference>
<dbReference type="Pfam" id="PF01965">
    <property type="entry name" value="DJ-1_PfpI"/>
    <property type="match status" value="1"/>
</dbReference>
<dbReference type="SUPFAM" id="SSF52317">
    <property type="entry name" value="Class I glutamine amidotransferase-like"/>
    <property type="match status" value="1"/>
</dbReference>
<dbReference type="PROSITE" id="PS51276">
    <property type="entry name" value="PEPTIDASE_C56_PFPI"/>
    <property type="match status" value="1"/>
</dbReference>
<reference key="1">
    <citation type="journal article" date="2001" name="Lancet">
        <title>Whole genome sequencing of meticillin-resistant Staphylococcus aureus.</title>
        <authorList>
            <person name="Kuroda M."/>
            <person name="Ohta T."/>
            <person name="Uchiyama I."/>
            <person name="Baba T."/>
            <person name="Yuzawa H."/>
            <person name="Kobayashi I."/>
            <person name="Cui L."/>
            <person name="Oguchi A."/>
            <person name="Aoki K."/>
            <person name="Nagai Y."/>
            <person name="Lian J.-Q."/>
            <person name="Ito T."/>
            <person name="Kanamori M."/>
            <person name="Matsumaru H."/>
            <person name="Maruyama A."/>
            <person name="Murakami H."/>
            <person name="Hosoyama A."/>
            <person name="Mizutani-Ui Y."/>
            <person name="Takahashi N.K."/>
            <person name="Sawano T."/>
            <person name="Inoue R."/>
            <person name="Kaito C."/>
            <person name="Sekimizu K."/>
            <person name="Hirakawa H."/>
            <person name="Kuhara S."/>
            <person name="Goto S."/>
            <person name="Yabuzaki J."/>
            <person name="Kanehisa M."/>
            <person name="Yamashita A."/>
            <person name="Oshima K."/>
            <person name="Furuya K."/>
            <person name="Yoshino C."/>
            <person name="Shiba T."/>
            <person name="Hattori M."/>
            <person name="Ogasawara N."/>
            <person name="Hayashi H."/>
            <person name="Hiramatsu K."/>
        </authorList>
    </citation>
    <scope>NUCLEOTIDE SEQUENCE [LARGE SCALE GENOMIC DNA]</scope>
    <source>
        <strain>Mu50 / ATCC 700699</strain>
    </source>
</reference>
<keyword id="KW-0002">3D-structure</keyword>
<comment type="similarity">
    <text evidence="2">Belongs to the peptidase C56 family.</text>
</comment>